<feature type="chain" id="PRO_0000372301" description="Putative antiporter subunit mnhA2">
    <location>
        <begin position="1"/>
        <end position="798"/>
    </location>
</feature>
<feature type="transmembrane region" description="Helical" evidence="2">
    <location>
        <begin position="1"/>
        <end position="21"/>
    </location>
</feature>
<feature type="transmembrane region" description="Helical" evidence="2">
    <location>
        <begin position="33"/>
        <end position="53"/>
    </location>
</feature>
<feature type="transmembrane region" description="Helical" evidence="2">
    <location>
        <begin position="78"/>
        <end position="98"/>
    </location>
</feature>
<feature type="transmembrane region" description="Helical" evidence="2">
    <location>
        <begin position="109"/>
        <end position="129"/>
    </location>
</feature>
<feature type="transmembrane region" description="Helical" evidence="2">
    <location>
        <begin position="133"/>
        <end position="153"/>
    </location>
</feature>
<feature type="transmembrane region" description="Helical" evidence="2">
    <location>
        <begin position="167"/>
        <end position="187"/>
    </location>
</feature>
<feature type="transmembrane region" description="Helical" evidence="2">
    <location>
        <begin position="209"/>
        <end position="229"/>
    </location>
</feature>
<feature type="transmembrane region" description="Helical" evidence="2">
    <location>
        <begin position="241"/>
        <end position="261"/>
    </location>
</feature>
<feature type="transmembrane region" description="Helical" evidence="2">
    <location>
        <begin position="272"/>
        <end position="292"/>
    </location>
</feature>
<feature type="transmembrane region" description="Helical" evidence="2">
    <location>
        <begin position="300"/>
        <end position="320"/>
    </location>
</feature>
<feature type="transmembrane region" description="Helical" evidence="2">
    <location>
        <begin position="337"/>
        <end position="357"/>
    </location>
</feature>
<feature type="transmembrane region" description="Helical" evidence="2">
    <location>
        <begin position="381"/>
        <end position="401"/>
    </location>
</feature>
<feature type="transmembrane region" description="Helical" evidence="2">
    <location>
        <begin position="431"/>
        <end position="451"/>
    </location>
</feature>
<feature type="transmembrane region" description="Helical" evidence="2">
    <location>
        <begin position="472"/>
        <end position="492"/>
    </location>
</feature>
<feature type="transmembrane region" description="Helical" evidence="2">
    <location>
        <begin position="526"/>
        <end position="546"/>
    </location>
</feature>
<feature type="transmembrane region" description="Helical" evidence="2">
    <location>
        <begin position="593"/>
        <end position="613"/>
    </location>
</feature>
<feature type="transmembrane region" description="Helical" evidence="2">
    <location>
        <begin position="625"/>
        <end position="645"/>
    </location>
</feature>
<feature type="transmembrane region" description="Helical" evidence="2">
    <location>
        <begin position="649"/>
        <end position="669"/>
    </location>
</feature>
<feature type="transmembrane region" description="Helical" evidence="2">
    <location>
        <begin position="674"/>
        <end position="694"/>
    </location>
</feature>
<feature type="transmembrane region" description="Helical" evidence="2">
    <location>
        <begin position="710"/>
        <end position="730"/>
    </location>
</feature>
<feature type="transmembrane region" description="Helical" evidence="2">
    <location>
        <begin position="766"/>
        <end position="786"/>
    </location>
</feature>
<evidence type="ECO:0000250" key="1"/>
<evidence type="ECO:0000255" key="2"/>
<evidence type="ECO:0000305" key="3"/>
<protein>
    <recommendedName>
        <fullName>Putative antiporter subunit mnhA2</fullName>
    </recommendedName>
    <alternativeName>
        <fullName>Mrp complex subunit A2</fullName>
    </alternativeName>
    <alternativeName>
        <fullName>Putative NADH-ubiquinone oxidoreductase subunit mnhA2</fullName>
    </alternativeName>
</protein>
<sequence>MSLVYLLSTLILIMVILLFTLTNIKFQKYAGHIALLAPIVASVYFLYQLPSVMQGNFVSVKIPWLTLLDINIDFRLDGLSLFFSLLISLIGLAVVYYATQYLSKEHDNLPRFYVYLLLFMFSMLGIVTANNTILMYVFWELTSVSSFLLIVYWYSKGDSQFGAIQSFMITVFGGLALLAGFIMIYIVTGTNSITSIIEQSDKIAQSHLFIPIIILLLLGAFTKSAQFPFHIWLPKAMAAPTPVSAYLHSATMVKAGIFLLFRFTSVLGLSDFYIYSVTFVGLITMIFGAVNATRQFDMKAILAYSTISQLGMIVSMVGLGGGFAQHPTGELSKIYGMILFAALFHLMNHALYKGALFMGVGIIDHETGTRDIRRLSGLKKVFPITHIVMLLSALSMAGIPFLNGFLSKEMFFDGLVSTVELPQFNLTLTVIITVIGVIASIFTLVYGVYMIKEVFWGDYQQADLPKKSPHEPFLFTLPSAIMMILLPVIFFIPNLFGHNIILPALRSITIGEKVDQVAPHVSQWHGFNLPLILSLIVIVVGFIMALRINWKKYANQVKVKTITDLYLGSYKQFEHYSGYGIRSLMNNRLNHYITITLLIFSMVVIYGMIQAGFPEVHQIHVSDFGPIEVITLIVVFVLGIALTFIRQRLTMVVLNGIIGYCVTIFFILMKAPDLALTQLVVETITTILFIVSFSRLPNVPRAKVNKKREAVKIIVSLLMAVIVVTLVFIAQQGDSMPTISTFYHDAYKLTGGKNIVNAILGDFRAIDTLFEGMVLIIAGLGIYTLLNFKERRGQDERE</sequence>
<gene>
    <name type="primary">mnhA2</name>
    <name type="synonym">mrpA2</name>
    <name type="ordered locus">SSP2096</name>
</gene>
<dbReference type="EMBL" id="AP008934">
    <property type="protein sequence ID" value="BAE19241.1"/>
    <property type="molecule type" value="Genomic_DNA"/>
</dbReference>
<dbReference type="RefSeq" id="WP_011303738.1">
    <property type="nucleotide sequence ID" value="NZ_MTGA01000039.1"/>
</dbReference>
<dbReference type="SMR" id="Q49VG9"/>
<dbReference type="GeneID" id="3616304"/>
<dbReference type="KEGG" id="ssp:SSP2096"/>
<dbReference type="PATRIC" id="fig|342451.11.peg.2089"/>
<dbReference type="eggNOG" id="COG1009">
    <property type="taxonomic scope" value="Bacteria"/>
</dbReference>
<dbReference type="eggNOG" id="COG2111">
    <property type="taxonomic scope" value="Bacteria"/>
</dbReference>
<dbReference type="HOGENOM" id="CLU_007100_2_0_9"/>
<dbReference type="OrthoDB" id="9807568at2"/>
<dbReference type="Proteomes" id="UP000006371">
    <property type="component" value="Chromosome"/>
</dbReference>
<dbReference type="GO" id="GO:0005886">
    <property type="term" value="C:plasma membrane"/>
    <property type="evidence" value="ECO:0007669"/>
    <property type="project" value="UniProtKB-SubCell"/>
</dbReference>
<dbReference type="GO" id="GO:0015297">
    <property type="term" value="F:antiporter activity"/>
    <property type="evidence" value="ECO:0007669"/>
    <property type="project" value="UniProtKB-KW"/>
</dbReference>
<dbReference type="GO" id="GO:0006811">
    <property type="term" value="P:monoatomic ion transport"/>
    <property type="evidence" value="ECO:0007669"/>
    <property type="project" value="UniProtKB-KW"/>
</dbReference>
<dbReference type="InterPro" id="IPR050616">
    <property type="entry name" value="CPA3_Na-H_Antiporter_A"/>
</dbReference>
<dbReference type="InterPro" id="IPR025383">
    <property type="entry name" value="MrpA_C/MbhD"/>
</dbReference>
<dbReference type="InterPro" id="IPR046806">
    <property type="entry name" value="MrpA_C/MbhE"/>
</dbReference>
<dbReference type="InterPro" id="IPR001750">
    <property type="entry name" value="ND/Mrp_TM"/>
</dbReference>
<dbReference type="InterPro" id="IPR001516">
    <property type="entry name" value="Proton_antipo_N"/>
</dbReference>
<dbReference type="NCBIfam" id="NF009286">
    <property type="entry name" value="PRK12646.1"/>
    <property type="match status" value="1"/>
</dbReference>
<dbReference type="PANTHER" id="PTHR43373">
    <property type="entry name" value="NA(+)/H(+) ANTIPORTER SUBUNIT"/>
    <property type="match status" value="1"/>
</dbReference>
<dbReference type="PANTHER" id="PTHR43373:SF1">
    <property type="entry name" value="NA(+)_H(+) ANTIPORTER SUBUNIT A"/>
    <property type="match status" value="1"/>
</dbReference>
<dbReference type="Pfam" id="PF13244">
    <property type="entry name" value="MbhD"/>
    <property type="match status" value="1"/>
</dbReference>
<dbReference type="Pfam" id="PF20501">
    <property type="entry name" value="MbhE"/>
    <property type="match status" value="1"/>
</dbReference>
<dbReference type="Pfam" id="PF00361">
    <property type="entry name" value="Proton_antipo_M"/>
    <property type="match status" value="1"/>
</dbReference>
<dbReference type="Pfam" id="PF00662">
    <property type="entry name" value="Proton_antipo_N"/>
    <property type="match status" value="1"/>
</dbReference>
<dbReference type="PRINTS" id="PR01434">
    <property type="entry name" value="NADHDHGNASE5"/>
</dbReference>
<reference key="1">
    <citation type="journal article" date="2005" name="Proc. Natl. Acad. Sci. U.S.A.">
        <title>Whole genome sequence of Staphylococcus saprophyticus reveals the pathogenesis of uncomplicated urinary tract infection.</title>
        <authorList>
            <person name="Kuroda M."/>
            <person name="Yamashita A."/>
            <person name="Hirakawa H."/>
            <person name="Kumano M."/>
            <person name="Morikawa K."/>
            <person name="Higashide M."/>
            <person name="Maruyama A."/>
            <person name="Inose Y."/>
            <person name="Matoba K."/>
            <person name="Toh H."/>
            <person name="Kuhara S."/>
            <person name="Hattori M."/>
            <person name="Ohta T."/>
        </authorList>
    </citation>
    <scope>NUCLEOTIDE SEQUENCE [LARGE SCALE GENOMIC DNA]</scope>
    <source>
        <strain>ATCC 15305 / DSM 20229 / NCIMB 8711 / NCTC 7292 / S-41</strain>
    </source>
</reference>
<comment type="subunit">
    <text evidence="1">May form a heterooligomeric complex that consists of seven subunits: mnhA2, mnhB2, mnhC2, mnhD2, mnhE2, mnhF2 and mnhG2.</text>
</comment>
<comment type="subcellular location">
    <subcellularLocation>
        <location evidence="3">Cell membrane</location>
        <topology evidence="3">Multi-pass membrane protein</topology>
    </subcellularLocation>
</comment>
<comment type="similarity">
    <text evidence="3">Belongs to the CPA3 antiporters (TC 2.A.63) subunit A family.</text>
</comment>
<name>MNHA2_STAS1</name>
<proteinExistence type="inferred from homology"/>
<accession>Q49VG9</accession>
<organism>
    <name type="scientific">Staphylococcus saprophyticus subsp. saprophyticus (strain ATCC 15305 / DSM 20229 / NCIMB 8711 / NCTC 7292 / S-41)</name>
    <dbReference type="NCBI Taxonomy" id="342451"/>
    <lineage>
        <taxon>Bacteria</taxon>
        <taxon>Bacillati</taxon>
        <taxon>Bacillota</taxon>
        <taxon>Bacilli</taxon>
        <taxon>Bacillales</taxon>
        <taxon>Staphylococcaceae</taxon>
        <taxon>Staphylococcus</taxon>
    </lineage>
</organism>
<keyword id="KW-0050">Antiport</keyword>
<keyword id="KW-1003">Cell membrane</keyword>
<keyword id="KW-0406">Ion transport</keyword>
<keyword id="KW-0472">Membrane</keyword>
<keyword id="KW-1185">Reference proteome</keyword>
<keyword id="KW-0812">Transmembrane</keyword>
<keyword id="KW-1133">Transmembrane helix</keyword>
<keyword id="KW-0813">Transport</keyword>